<reference key="1">
    <citation type="journal article" date="1999" name="Nature">
        <title>A capsaicin-receptor homologue with a high threshold for noxious heat.</title>
        <authorList>
            <person name="Caterina M.J."/>
            <person name="Rosen T.A."/>
            <person name="Tominaga M."/>
            <person name="Brake A.J."/>
            <person name="Julius D."/>
        </authorList>
    </citation>
    <scope>NUCLEOTIDE SEQUENCE [MRNA]</scope>
    <scope>FUNCTION</scope>
    <scope>TRANSPORTER ACTIVITY</scope>
    <source>
        <tissue>Lymphoblast</tissue>
    </source>
</reference>
<reference key="2">
    <citation type="submission" date="1998-11" db="EMBL/GenBank/DDBJ databases">
        <title>Cloning and functional expression of VRL, a vanilloid receptor-like gene.</title>
        <authorList>
            <person name="Garcia R.L."/>
            <person name="Delmas P."/>
            <person name="Cesare P."/>
            <person name="England S."/>
            <person name="Liapi A."/>
            <person name="Wood J.N."/>
        </authorList>
    </citation>
    <scope>NUCLEOTIDE SEQUENCE [MRNA]</scope>
    <source>
        <tissue>Lymphoblast</tissue>
    </source>
</reference>
<reference key="3">
    <citation type="submission" date="2002-05" db="EMBL/GenBank/DDBJ databases">
        <authorList>
            <person name="Kelsell R.E."/>
        </authorList>
    </citation>
    <scope>NUCLEOTIDE SEQUENCE [MRNA]</scope>
</reference>
<reference key="4">
    <citation type="journal article" date="2004" name="Nat. Genet.">
        <title>Complete sequencing and characterization of 21,243 full-length human cDNAs.</title>
        <authorList>
            <person name="Ota T."/>
            <person name="Suzuki Y."/>
            <person name="Nishikawa T."/>
            <person name="Otsuki T."/>
            <person name="Sugiyama T."/>
            <person name="Irie R."/>
            <person name="Wakamatsu A."/>
            <person name="Hayashi K."/>
            <person name="Sato H."/>
            <person name="Nagai K."/>
            <person name="Kimura K."/>
            <person name="Makita H."/>
            <person name="Sekine M."/>
            <person name="Obayashi M."/>
            <person name="Nishi T."/>
            <person name="Shibahara T."/>
            <person name="Tanaka T."/>
            <person name="Ishii S."/>
            <person name="Yamamoto J."/>
            <person name="Saito K."/>
            <person name="Kawai Y."/>
            <person name="Isono Y."/>
            <person name="Nakamura Y."/>
            <person name="Nagahari K."/>
            <person name="Murakami K."/>
            <person name="Yasuda T."/>
            <person name="Iwayanagi T."/>
            <person name="Wagatsuma M."/>
            <person name="Shiratori A."/>
            <person name="Sudo H."/>
            <person name="Hosoiri T."/>
            <person name="Kaku Y."/>
            <person name="Kodaira H."/>
            <person name="Kondo H."/>
            <person name="Sugawara M."/>
            <person name="Takahashi M."/>
            <person name="Kanda K."/>
            <person name="Yokoi T."/>
            <person name="Furuya T."/>
            <person name="Kikkawa E."/>
            <person name="Omura Y."/>
            <person name="Abe K."/>
            <person name="Kamihara K."/>
            <person name="Katsuta N."/>
            <person name="Sato K."/>
            <person name="Tanikawa M."/>
            <person name="Yamazaki M."/>
            <person name="Ninomiya K."/>
            <person name="Ishibashi T."/>
            <person name="Yamashita H."/>
            <person name="Murakawa K."/>
            <person name="Fujimori K."/>
            <person name="Tanai H."/>
            <person name="Kimata M."/>
            <person name="Watanabe M."/>
            <person name="Hiraoka S."/>
            <person name="Chiba Y."/>
            <person name="Ishida S."/>
            <person name="Ono Y."/>
            <person name="Takiguchi S."/>
            <person name="Watanabe S."/>
            <person name="Yosida M."/>
            <person name="Hotuta T."/>
            <person name="Kusano J."/>
            <person name="Kanehori K."/>
            <person name="Takahashi-Fujii A."/>
            <person name="Hara H."/>
            <person name="Tanase T.-O."/>
            <person name="Nomura Y."/>
            <person name="Togiya S."/>
            <person name="Komai F."/>
            <person name="Hara R."/>
            <person name="Takeuchi K."/>
            <person name="Arita M."/>
            <person name="Imose N."/>
            <person name="Musashino K."/>
            <person name="Yuuki H."/>
            <person name="Oshima A."/>
            <person name="Sasaki N."/>
            <person name="Aotsuka S."/>
            <person name="Yoshikawa Y."/>
            <person name="Matsunawa H."/>
            <person name="Ichihara T."/>
            <person name="Shiohata N."/>
            <person name="Sano S."/>
            <person name="Moriya S."/>
            <person name="Momiyama H."/>
            <person name="Satoh N."/>
            <person name="Takami S."/>
            <person name="Terashima Y."/>
            <person name="Suzuki O."/>
            <person name="Nakagawa S."/>
            <person name="Senoh A."/>
            <person name="Mizoguchi H."/>
            <person name="Goto Y."/>
            <person name="Shimizu F."/>
            <person name="Wakebe H."/>
            <person name="Hishigaki H."/>
            <person name="Watanabe T."/>
            <person name="Sugiyama A."/>
            <person name="Takemoto M."/>
            <person name="Kawakami B."/>
            <person name="Yamazaki M."/>
            <person name="Watanabe K."/>
            <person name="Kumagai A."/>
            <person name="Itakura S."/>
            <person name="Fukuzumi Y."/>
            <person name="Fujimori Y."/>
            <person name="Komiyama M."/>
            <person name="Tashiro H."/>
            <person name="Tanigami A."/>
            <person name="Fujiwara T."/>
            <person name="Ono T."/>
            <person name="Yamada K."/>
            <person name="Fujii Y."/>
            <person name="Ozaki K."/>
            <person name="Hirao M."/>
            <person name="Ohmori Y."/>
            <person name="Kawabata A."/>
            <person name="Hikiji T."/>
            <person name="Kobatake N."/>
            <person name="Inagaki H."/>
            <person name="Ikema Y."/>
            <person name="Okamoto S."/>
            <person name="Okitani R."/>
            <person name="Kawakami T."/>
            <person name="Noguchi S."/>
            <person name="Itoh T."/>
            <person name="Shigeta K."/>
            <person name="Senba T."/>
            <person name="Matsumura K."/>
            <person name="Nakajima Y."/>
            <person name="Mizuno T."/>
            <person name="Morinaga M."/>
            <person name="Sasaki M."/>
            <person name="Togashi T."/>
            <person name="Oyama M."/>
            <person name="Hata H."/>
            <person name="Watanabe M."/>
            <person name="Komatsu T."/>
            <person name="Mizushima-Sugano J."/>
            <person name="Satoh T."/>
            <person name="Shirai Y."/>
            <person name="Takahashi Y."/>
            <person name="Nakagawa K."/>
            <person name="Okumura K."/>
            <person name="Nagase T."/>
            <person name="Nomura N."/>
            <person name="Kikuchi H."/>
            <person name="Masuho Y."/>
            <person name="Yamashita R."/>
            <person name="Nakai K."/>
            <person name="Yada T."/>
            <person name="Nakamura Y."/>
            <person name="Ohara O."/>
            <person name="Isogai T."/>
            <person name="Sugano S."/>
        </authorList>
    </citation>
    <scope>NUCLEOTIDE SEQUENCE [LARGE SCALE MRNA]</scope>
    <source>
        <tissue>Brain</tissue>
    </source>
</reference>
<reference key="5">
    <citation type="journal article" date="2006" name="Nature">
        <title>DNA sequence of human chromosome 17 and analysis of rearrangement in the human lineage.</title>
        <authorList>
            <person name="Zody M.C."/>
            <person name="Garber M."/>
            <person name="Adams D.J."/>
            <person name="Sharpe T."/>
            <person name="Harrow J."/>
            <person name="Lupski J.R."/>
            <person name="Nicholson C."/>
            <person name="Searle S.M."/>
            <person name="Wilming L."/>
            <person name="Young S.K."/>
            <person name="Abouelleil A."/>
            <person name="Allen N.R."/>
            <person name="Bi W."/>
            <person name="Bloom T."/>
            <person name="Borowsky M.L."/>
            <person name="Bugalter B.E."/>
            <person name="Butler J."/>
            <person name="Chang J.L."/>
            <person name="Chen C.-K."/>
            <person name="Cook A."/>
            <person name="Corum B."/>
            <person name="Cuomo C.A."/>
            <person name="de Jong P.J."/>
            <person name="DeCaprio D."/>
            <person name="Dewar K."/>
            <person name="FitzGerald M."/>
            <person name="Gilbert J."/>
            <person name="Gibson R."/>
            <person name="Gnerre S."/>
            <person name="Goldstein S."/>
            <person name="Grafham D.V."/>
            <person name="Grocock R."/>
            <person name="Hafez N."/>
            <person name="Hagopian D.S."/>
            <person name="Hart E."/>
            <person name="Norman C.H."/>
            <person name="Humphray S."/>
            <person name="Jaffe D.B."/>
            <person name="Jones M."/>
            <person name="Kamal M."/>
            <person name="Khodiyar V.K."/>
            <person name="LaButti K."/>
            <person name="Laird G."/>
            <person name="Lehoczky J."/>
            <person name="Liu X."/>
            <person name="Lokyitsang T."/>
            <person name="Loveland J."/>
            <person name="Lui A."/>
            <person name="Macdonald P."/>
            <person name="Major J.E."/>
            <person name="Matthews L."/>
            <person name="Mauceli E."/>
            <person name="McCarroll S.A."/>
            <person name="Mihalev A.H."/>
            <person name="Mudge J."/>
            <person name="Nguyen C."/>
            <person name="Nicol R."/>
            <person name="O'Leary S.B."/>
            <person name="Osoegawa K."/>
            <person name="Schwartz D.C."/>
            <person name="Shaw-Smith C."/>
            <person name="Stankiewicz P."/>
            <person name="Steward C."/>
            <person name="Swarbreck D."/>
            <person name="Venkataraman V."/>
            <person name="Whittaker C.A."/>
            <person name="Yang X."/>
            <person name="Zimmer A.R."/>
            <person name="Bradley A."/>
            <person name="Hubbard T."/>
            <person name="Birren B.W."/>
            <person name="Rogers J."/>
            <person name="Lander E.S."/>
            <person name="Nusbaum C."/>
        </authorList>
    </citation>
    <scope>NUCLEOTIDE SEQUENCE [LARGE SCALE GENOMIC DNA]</scope>
</reference>
<reference key="6">
    <citation type="submission" date="2005-07" db="EMBL/GenBank/DDBJ databases">
        <authorList>
            <person name="Mural R.J."/>
            <person name="Istrail S."/>
            <person name="Sutton G.G."/>
            <person name="Florea L."/>
            <person name="Halpern A.L."/>
            <person name="Mobarry C.M."/>
            <person name="Lippert R."/>
            <person name="Walenz B."/>
            <person name="Shatkay H."/>
            <person name="Dew I."/>
            <person name="Miller J.R."/>
            <person name="Flanigan M.J."/>
            <person name="Edwards N.J."/>
            <person name="Bolanos R."/>
            <person name="Fasulo D."/>
            <person name="Halldorsson B.V."/>
            <person name="Hannenhalli S."/>
            <person name="Turner R."/>
            <person name="Yooseph S."/>
            <person name="Lu F."/>
            <person name="Nusskern D.R."/>
            <person name="Shue B.C."/>
            <person name="Zheng X.H."/>
            <person name="Zhong F."/>
            <person name="Delcher A.L."/>
            <person name="Huson D.H."/>
            <person name="Kravitz S.A."/>
            <person name="Mouchard L."/>
            <person name="Reinert K."/>
            <person name="Remington K.A."/>
            <person name="Clark A.G."/>
            <person name="Waterman M.S."/>
            <person name="Eichler E.E."/>
            <person name="Adams M.D."/>
            <person name="Hunkapiller M.W."/>
            <person name="Myers E.W."/>
            <person name="Venter J.C."/>
        </authorList>
    </citation>
    <scope>NUCLEOTIDE SEQUENCE [LARGE SCALE GENOMIC DNA]</scope>
</reference>
<reference key="7">
    <citation type="journal article" date="2004" name="Genome Res.">
        <title>The status, quality, and expansion of the NIH full-length cDNA project: the Mammalian Gene Collection (MGC).</title>
        <authorList>
            <consortium name="The MGC Project Team"/>
        </authorList>
    </citation>
    <scope>NUCLEOTIDE SEQUENCE [LARGE SCALE MRNA]</scope>
    <source>
        <tissue>Skin</tissue>
    </source>
</reference>
<reference key="8">
    <citation type="journal article" date="2006" name="J. Proteome Res.">
        <title>Proteomic and bioinformatic characterization of the biogenesis and function of melanosomes.</title>
        <authorList>
            <person name="Chi A."/>
            <person name="Valencia J.C."/>
            <person name="Hu Z.-Z."/>
            <person name="Watabe H."/>
            <person name="Yamaguchi H."/>
            <person name="Mangini N.J."/>
            <person name="Huang H."/>
            <person name="Canfield V.A."/>
            <person name="Cheng K.C."/>
            <person name="Yang F."/>
            <person name="Abe R."/>
            <person name="Yamagishi S."/>
            <person name="Shabanowitz J."/>
            <person name="Hearing V.J."/>
            <person name="Wu C."/>
            <person name="Appella E."/>
            <person name="Hunt D.F."/>
        </authorList>
    </citation>
    <scope>SUBCELLULAR LOCATION [LARGE SCALE ANALYSIS]</scope>
    <source>
        <tissue>Melanoma</tissue>
    </source>
</reference>
<reference key="9">
    <citation type="journal article" date="2013" name="J. Proteome Res.">
        <title>Toward a comprehensive characterization of a human cancer cell phosphoproteome.</title>
        <authorList>
            <person name="Zhou H."/>
            <person name="Di Palma S."/>
            <person name="Preisinger C."/>
            <person name="Peng M."/>
            <person name="Polat A.N."/>
            <person name="Heck A.J."/>
            <person name="Mohammed S."/>
        </authorList>
    </citation>
    <scope>IDENTIFICATION BY MASS SPECTROMETRY [LARGE SCALE ANALYSIS]</scope>
    <source>
        <tissue>Erythroleukemia</tissue>
    </source>
</reference>
<reference key="10">
    <citation type="journal article" date="2014" name="J. Proteomics">
        <title>An enzyme assisted RP-RPLC approach for in-depth analysis of human liver phosphoproteome.</title>
        <authorList>
            <person name="Bian Y."/>
            <person name="Song C."/>
            <person name="Cheng K."/>
            <person name="Dong M."/>
            <person name="Wang F."/>
            <person name="Huang J."/>
            <person name="Sun D."/>
            <person name="Wang L."/>
            <person name="Ye M."/>
            <person name="Zou H."/>
        </authorList>
    </citation>
    <scope>IDENTIFICATION BY MASS SPECTROMETRY [LARGE SCALE ANALYSIS]</scope>
    <source>
        <tissue>Liver</tissue>
    </source>
</reference>
<reference key="11">
    <citation type="journal article" date="2006" name="Protein Sci.">
        <title>Crystal structure of the human TRPV2 channel ankyrin repeat domain.</title>
        <authorList>
            <person name="McCleverty C.J."/>
            <person name="Koesema E."/>
            <person name="Patapoutian A."/>
            <person name="Lesley S.A."/>
            <person name="Kreusch A."/>
        </authorList>
    </citation>
    <scope>X-RAY CRYSTALLOGRAPHY (1.7 ANGSTROMS) OF 69-319</scope>
    <scope>ANK REPEATS</scope>
</reference>
<evidence type="ECO:0000250" key="1">
    <source>
        <dbReference type="UniProtKB" id="Q9WTR1"/>
    </source>
</evidence>
<evidence type="ECO:0000250" key="2">
    <source>
        <dbReference type="UniProtKB" id="Q9WUD2"/>
    </source>
</evidence>
<evidence type="ECO:0000255" key="3"/>
<evidence type="ECO:0000255" key="4">
    <source>
        <dbReference type="PROSITE-ProRule" id="PRU00023"/>
    </source>
</evidence>
<evidence type="ECO:0000256" key="5">
    <source>
        <dbReference type="SAM" id="MobiDB-lite"/>
    </source>
</evidence>
<evidence type="ECO:0000269" key="6">
    <source>
    </source>
</evidence>
<evidence type="ECO:0000269" key="7">
    <source>
    </source>
</evidence>
<evidence type="ECO:0000269" key="8">
    <source>
    </source>
</evidence>
<evidence type="ECO:0000305" key="9"/>
<evidence type="ECO:0007829" key="10">
    <source>
        <dbReference type="PDB" id="2F37"/>
    </source>
</evidence>
<accession>Q9Y5S1</accession>
<accession>A6NML2</accession>
<accession>A8K0Z0</accession>
<accession>Q9Y670</accession>
<protein>
    <recommendedName>
        <fullName>Transient receptor potential cation channel subfamily V member 2</fullName>
        <shortName>TrpV2</shortName>
    </recommendedName>
    <alternativeName>
        <fullName>Osm-9-like TRP channel 2</fullName>
        <shortName>OTRPC2</shortName>
    </alternativeName>
    <alternativeName>
        <fullName>Vanilloid receptor-like protein 1</fullName>
        <shortName>VRL-1</shortName>
    </alternativeName>
</protein>
<organism>
    <name type="scientific">Homo sapiens</name>
    <name type="common">Human</name>
    <dbReference type="NCBI Taxonomy" id="9606"/>
    <lineage>
        <taxon>Eukaryota</taxon>
        <taxon>Metazoa</taxon>
        <taxon>Chordata</taxon>
        <taxon>Craniata</taxon>
        <taxon>Vertebrata</taxon>
        <taxon>Euteleostomi</taxon>
        <taxon>Mammalia</taxon>
        <taxon>Eutheria</taxon>
        <taxon>Euarchontoglires</taxon>
        <taxon>Primates</taxon>
        <taxon>Haplorrhini</taxon>
        <taxon>Catarrhini</taxon>
        <taxon>Hominidae</taxon>
        <taxon>Homo</taxon>
    </lineage>
</organism>
<sequence>MTSPSSSPVFRLETLDGGQEDGSEADRGKLDFGSGLPPMESQFQGEDRKFAPQIRVNLNYRKGTGASQPDPNRFDRDRLFNAVSRGVPEDLAGLPEYLSKTSKYLTDSEYTEGSTGKTCLMKAVLNLKDGVNACILPLLQIDRDSGNPQPLVNAQCTDDYYRGHSALHIAIEKRSLQCVKLLVENGANVHARACGRFFQKGQGTCFYFGELPLSLAACTKQWDVVSYLLENPHQPASLQATDSQGNTVLHALVMISDNSAENIALVTSMYDGLLQAGARLCPTVQLEDIRNLQDLTPLKLAAKEGKIEIFRHILQREFSGLSHLSRKFTEWCYGPVRVSLYDLASVDSCEENSVLEIIAFHCKSPHRHRMVVLEPLNKLLQAKWDLLIPKFFLNFLCNLIYMFIFTAVAYHQPTLKKQAAPHLKAEVGNSMLLTGHILILLGGIYLLVGQLWYFWRRHVFIWISFIDSYFEILFLFQALLTVVSQVLCFLAIEWYLPLLVSALVLGWLNLLYYTRGFQHTGIYSVMIQKVILRDLLRFLLIYLVFLFGFAVALVSLSQEAWRPEAPTGPNATESVQPMEGQEDEGNGAQYRGILEASLELFKFTIGMGELAFQEQLHFRGMVLLLLLAYVLLTYILLLNMLIALMSETVNSVATDSWSIWKLQKAISVLEMENGYWWCRKKQRAGVMLTVGTKPDGSPDERWCFRVEEVNWASWEQTLPTLCEDPSGAGVPRTLENPVLASPPKEDEDGASEENYVPVQLLQSN</sequence>
<name>TRPV2_HUMAN</name>
<dbReference type="EMBL" id="AF129112">
    <property type="protein sequence ID" value="AAD26363.1"/>
    <property type="molecule type" value="mRNA"/>
</dbReference>
<dbReference type="EMBL" id="AF103906">
    <property type="protein sequence ID" value="AAD41724.1"/>
    <property type="molecule type" value="mRNA"/>
</dbReference>
<dbReference type="EMBL" id="AJ487963">
    <property type="protein sequence ID" value="CAD32310.1"/>
    <property type="molecule type" value="mRNA"/>
</dbReference>
<dbReference type="EMBL" id="AK289705">
    <property type="protein sequence ID" value="BAF82394.1"/>
    <property type="molecule type" value="mRNA"/>
</dbReference>
<dbReference type="EMBL" id="AC093484">
    <property type="status" value="NOT_ANNOTATED_CDS"/>
    <property type="molecule type" value="Genomic_DNA"/>
</dbReference>
<dbReference type="EMBL" id="CH471222">
    <property type="protein sequence ID" value="EAX04508.1"/>
    <property type="molecule type" value="Genomic_DNA"/>
</dbReference>
<dbReference type="EMBL" id="BC018926">
    <property type="protein sequence ID" value="AAH18926.1"/>
    <property type="molecule type" value="mRNA"/>
</dbReference>
<dbReference type="EMBL" id="BC051305">
    <property type="protein sequence ID" value="AAH51305.1"/>
    <property type="molecule type" value="mRNA"/>
</dbReference>
<dbReference type="CCDS" id="CCDS32576.1"/>
<dbReference type="RefSeq" id="NP_057197.2">
    <property type="nucleotide sequence ID" value="NM_016113.4"/>
</dbReference>
<dbReference type="PDB" id="2F37">
    <property type="method" value="X-ray"/>
    <property type="resolution" value="1.70 A"/>
    <property type="chains" value="A/B=69-319"/>
</dbReference>
<dbReference type="PDBsum" id="2F37"/>
<dbReference type="SMR" id="Q9Y5S1"/>
<dbReference type="BioGRID" id="119520">
    <property type="interactions" value="9"/>
</dbReference>
<dbReference type="FunCoup" id="Q9Y5S1">
    <property type="interactions" value="584"/>
</dbReference>
<dbReference type="IntAct" id="Q9Y5S1">
    <property type="interactions" value="28"/>
</dbReference>
<dbReference type="MINT" id="Q9Y5S1"/>
<dbReference type="STRING" id="9606.ENSP00000342222"/>
<dbReference type="BindingDB" id="Q9Y5S1"/>
<dbReference type="ChEMBL" id="CHEMBL5051"/>
<dbReference type="DrugBank" id="DB09061">
    <property type="generic name" value="Cannabidiol"/>
</dbReference>
<dbReference type="DrugBank" id="DB14050">
    <property type="generic name" value="Cannabidivarin"/>
</dbReference>
<dbReference type="DrugBank" id="DB14009">
    <property type="generic name" value="Medical Cannabis"/>
</dbReference>
<dbReference type="DrugBank" id="DB14011">
    <property type="generic name" value="Nabiximols"/>
</dbReference>
<dbReference type="DrugBank" id="DB11755">
    <property type="generic name" value="Tetrahydrocannabivarin"/>
</dbReference>
<dbReference type="DrugCentral" id="Q9Y5S1"/>
<dbReference type="GuidetoPHARMACOLOGY" id="508"/>
<dbReference type="TCDB" id="1.A.4.2.8">
    <property type="family name" value="the transient receptor potential ca2+/cation channel (trp-cc) family"/>
</dbReference>
<dbReference type="GlyCosmos" id="Q9Y5S1">
    <property type="glycosylation" value="1 site, No reported glycans"/>
</dbReference>
<dbReference type="GlyGen" id="Q9Y5S1">
    <property type="glycosylation" value="2 sites"/>
</dbReference>
<dbReference type="iPTMnet" id="Q9Y5S1"/>
<dbReference type="MetOSite" id="Q9Y5S1"/>
<dbReference type="PhosphoSitePlus" id="Q9Y5S1"/>
<dbReference type="BioMuta" id="TRPV2"/>
<dbReference type="DMDM" id="62901477"/>
<dbReference type="jPOST" id="Q9Y5S1"/>
<dbReference type="MassIVE" id="Q9Y5S1"/>
<dbReference type="PaxDb" id="9606-ENSP00000342222"/>
<dbReference type="PeptideAtlas" id="Q9Y5S1"/>
<dbReference type="ProteomicsDB" id="86489"/>
<dbReference type="Pumba" id="Q9Y5S1"/>
<dbReference type="Antibodypedia" id="13247">
    <property type="antibodies" value="295 antibodies from 34 providers"/>
</dbReference>
<dbReference type="DNASU" id="51393"/>
<dbReference type="Ensembl" id="ENST00000338560.12">
    <property type="protein sequence ID" value="ENSP00000342222.7"/>
    <property type="gene ID" value="ENSG00000187688.15"/>
</dbReference>
<dbReference type="GeneID" id="51393"/>
<dbReference type="KEGG" id="hsa:51393"/>
<dbReference type="MANE-Select" id="ENST00000338560.12">
    <property type="protein sequence ID" value="ENSP00000342222.7"/>
    <property type="RefSeq nucleotide sequence ID" value="NM_016113.5"/>
    <property type="RefSeq protein sequence ID" value="NP_057197.2"/>
</dbReference>
<dbReference type="UCSC" id="uc002gpy.3">
    <property type="organism name" value="human"/>
</dbReference>
<dbReference type="AGR" id="HGNC:18082"/>
<dbReference type="CTD" id="51393"/>
<dbReference type="DisGeNET" id="51393"/>
<dbReference type="GeneCards" id="TRPV2"/>
<dbReference type="HGNC" id="HGNC:18082">
    <property type="gene designation" value="TRPV2"/>
</dbReference>
<dbReference type="HPA" id="ENSG00000187688">
    <property type="expression patterns" value="Low tissue specificity"/>
</dbReference>
<dbReference type="MIM" id="606676">
    <property type="type" value="gene"/>
</dbReference>
<dbReference type="neXtProt" id="NX_Q9Y5S1"/>
<dbReference type="OpenTargets" id="ENSG00000187688"/>
<dbReference type="PharmGKB" id="PA38292"/>
<dbReference type="VEuPathDB" id="HostDB:ENSG00000187688"/>
<dbReference type="eggNOG" id="KOG3676">
    <property type="taxonomic scope" value="Eukaryota"/>
</dbReference>
<dbReference type="GeneTree" id="ENSGT00940000158512"/>
<dbReference type="HOGENOM" id="CLU_012795_1_1_1"/>
<dbReference type="InParanoid" id="Q9Y5S1"/>
<dbReference type="OMA" id="WRRHVFI"/>
<dbReference type="OrthoDB" id="533508at2759"/>
<dbReference type="PAN-GO" id="Q9Y5S1">
    <property type="GO annotations" value="3 GO annotations based on evolutionary models"/>
</dbReference>
<dbReference type="PhylomeDB" id="Q9Y5S1"/>
<dbReference type="TreeFam" id="TF314711"/>
<dbReference type="PathwayCommons" id="Q9Y5S1"/>
<dbReference type="Reactome" id="R-HSA-3295583">
    <property type="pathway name" value="TRP channels"/>
</dbReference>
<dbReference type="SignaLink" id="Q9Y5S1"/>
<dbReference type="BioGRID-ORCS" id="51393">
    <property type="hits" value="20 hits in 1162 CRISPR screens"/>
</dbReference>
<dbReference type="ChiTaRS" id="TRPV2">
    <property type="organism name" value="human"/>
</dbReference>
<dbReference type="EvolutionaryTrace" id="Q9Y5S1"/>
<dbReference type="GeneWiki" id="TRPV2"/>
<dbReference type="GenomeRNAi" id="51393"/>
<dbReference type="Pharos" id="Q9Y5S1">
    <property type="development level" value="Tchem"/>
</dbReference>
<dbReference type="PRO" id="PR:Q9Y5S1"/>
<dbReference type="Proteomes" id="UP000005640">
    <property type="component" value="Chromosome 17"/>
</dbReference>
<dbReference type="RNAct" id="Q9Y5S1">
    <property type="molecule type" value="protein"/>
</dbReference>
<dbReference type="Bgee" id="ENSG00000187688">
    <property type="expression patterns" value="Expressed in granulocyte and 125 other cell types or tissues"/>
</dbReference>
<dbReference type="ExpressionAtlas" id="Q9Y5S1">
    <property type="expression patterns" value="baseline and differential"/>
</dbReference>
<dbReference type="GO" id="GO:0044295">
    <property type="term" value="C:axonal growth cone"/>
    <property type="evidence" value="ECO:0007669"/>
    <property type="project" value="Ensembl"/>
</dbReference>
<dbReference type="GO" id="GO:0044297">
    <property type="term" value="C:cell body"/>
    <property type="evidence" value="ECO:0007669"/>
    <property type="project" value="Ensembl"/>
</dbReference>
<dbReference type="GO" id="GO:0009986">
    <property type="term" value="C:cell surface"/>
    <property type="evidence" value="ECO:0007669"/>
    <property type="project" value="Ensembl"/>
</dbReference>
<dbReference type="GO" id="GO:0032584">
    <property type="term" value="C:growth cone membrane"/>
    <property type="evidence" value="ECO:0007669"/>
    <property type="project" value="Ensembl"/>
</dbReference>
<dbReference type="GO" id="GO:0042470">
    <property type="term" value="C:melanosome"/>
    <property type="evidence" value="ECO:0007669"/>
    <property type="project" value="UniProtKB-SubCell"/>
</dbReference>
<dbReference type="GO" id="GO:0005886">
    <property type="term" value="C:plasma membrane"/>
    <property type="evidence" value="ECO:0000314"/>
    <property type="project" value="MGI"/>
</dbReference>
<dbReference type="GO" id="GO:0005262">
    <property type="term" value="F:calcium channel activity"/>
    <property type="evidence" value="ECO:0000318"/>
    <property type="project" value="GO_Central"/>
</dbReference>
<dbReference type="GO" id="GO:0005261">
    <property type="term" value="F:monoatomic cation channel activity"/>
    <property type="evidence" value="ECO:0000314"/>
    <property type="project" value="MGI"/>
</dbReference>
<dbReference type="GO" id="GO:0005216">
    <property type="term" value="F:monoatomic ion channel activity"/>
    <property type="evidence" value="ECO:0000304"/>
    <property type="project" value="ProtInc"/>
</dbReference>
<dbReference type="GO" id="GO:0015075">
    <property type="term" value="F:monoatomic ion transmembrane transporter activity"/>
    <property type="evidence" value="ECO:0000304"/>
    <property type="project" value="ProtInc"/>
</dbReference>
<dbReference type="GO" id="GO:0098703">
    <property type="term" value="P:calcium ion import across plasma membrane"/>
    <property type="evidence" value="ECO:0000318"/>
    <property type="project" value="GO_Central"/>
</dbReference>
<dbReference type="GO" id="GO:0070588">
    <property type="term" value="P:calcium ion transmembrane transport"/>
    <property type="evidence" value="ECO:0000304"/>
    <property type="project" value="Reactome"/>
</dbReference>
<dbReference type="GO" id="GO:0045773">
    <property type="term" value="P:positive regulation of axon extension"/>
    <property type="evidence" value="ECO:0007669"/>
    <property type="project" value="Ensembl"/>
</dbReference>
<dbReference type="GO" id="GO:0090280">
    <property type="term" value="P:positive regulation of calcium ion import"/>
    <property type="evidence" value="ECO:0007669"/>
    <property type="project" value="Ensembl"/>
</dbReference>
<dbReference type="GO" id="GO:0120162">
    <property type="term" value="P:positive regulation of cold-induced thermogenesis"/>
    <property type="evidence" value="ECO:0000250"/>
    <property type="project" value="YuBioLab"/>
</dbReference>
<dbReference type="GO" id="GO:0009266">
    <property type="term" value="P:response to temperature stimulus"/>
    <property type="evidence" value="ECO:0000314"/>
    <property type="project" value="MGI"/>
</dbReference>
<dbReference type="GO" id="GO:0007600">
    <property type="term" value="P:sensory perception"/>
    <property type="evidence" value="ECO:0000304"/>
    <property type="project" value="ProtInc"/>
</dbReference>
<dbReference type="CDD" id="cd22197">
    <property type="entry name" value="TRPV2"/>
    <property type="match status" value="1"/>
</dbReference>
<dbReference type="FunFam" id="1.25.40.20:FF:000018">
    <property type="entry name" value="Transient receptor potential cation channel subfamily V member 1"/>
    <property type="match status" value="1"/>
</dbReference>
<dbReference type="Gene3D" id="1.25.40.20">
    <property type="entry name" value="Ankyrin repeat-containing domain"/>
    <property type="match status" value="1"/>
</dbReference>
<dbReference type="InterPro" id="IPR002110">
    <property type="entry name" value="Ankyrin_rpt"/>
</dbReference>
<dbReference type="InterPro" id="IPR036770">
    <property type="entry name" value="Ankyrin_rpt-contain_sf"/>
</dbReference>
<dbReference type="InterPro" id="IPR005821">
    <property type="entry name" value="Ion_trans_dom"/>
</dbReference>
<dbReference type="InterPro" id="IPR024862">
    <property type="entry name" value="TRPV"/>
</dbReference>
<dbReference type="InterPro" id="IPR008347">
    <property type="entry name" value="TrpV1-4"/>
</dbReference>
<dbReference type="NCBIfam" id="TIGR00870">
    <property type="entry name" value="trp"/>
    <property type="match status" value="1"/>
</dbReference>
<dbReference type="PANTHER" id="PTHR10582:SF5">
    <property type="entry name" value="TRANSIENT RECEPTOR POTENTIAL CATION CHANNEL SUBFAMILY V MEMBER 2"/>
    <property type="match status" value="1"/>
</dbReference>
<dbReference type="PANTHER" id="PTHR10582">
    <property type="entry name" value="TRANSIENT RECEPTOR POTENTIAL ION CHANNEL PROTEIN"/>
    <property type="match status" value="1"/>
</dbReference>
<dbReference type="Pfam" id="PF12796">
    <property type="entry name" value="Ank_2"/>
    <property type="match status" value="1"/>
</dbReference>
<dbReference type="Pfam" id="PF00520">
    <property type="entry name" value="Ion_trans"/>
    <property type="match status" value="1"/>
</dbReference>
<dbReference type="PRINTS" id="PR01768">
    <property type="entry name" value="TRPVRECEPTOR"/>
</dbReference>
<dbReference type="SMART" id="SM00248">
    <property type="entry name" value="ANK"/>
    <property type="match status" value="4"/>
</dbReference>
<dbReference type="SUPFAM" id="SSF48403">
    <property type="entry name" value="Ankyrin repeat"/>
    <property type="match status" value="1"/>
</dbReference>
<dbReference type="PROSITE" id="PS50297">
    <property type="entry name" value="ANK_REP_REGION"/>
    <property type="match status" value="1"/>
</dbReference>
<dbReference type="PROSITE" id="PS50088">
    <property type="entry name" value="ANK_REPEAT"/>
    <property type="match status" value="1"/>
</dbReference>
<keyword id="KW-0002">3D-structure</keyword>
<keyword id="KW-0040">ANK repeat</keyword>
<keyword id="KW-0106">Calcium</keyword>
<keyword id="KW-0107">Calcium channel</keyword>
<keyword id="KW-0109">Calcium transport</keyword>
<keyword id="KW-1003">Cell membrane</keyword>
<keyword id="KW-0963">Cytoplasm</keyword>
<keyword id="KW-0325">Glycoprotein</keyword>
<keyword id="KW-0407">Ion channel</keyword>
<keyword id="KW-0406">Ion transport</keyword>
<keyword id="KW-0472">Membrane</keyword>
<keyword id="KW-0597">Phosphoprotein</keyword>
<keyword id="KW-1267">Proteomics identification</keyword>
<keyword id="KW-1185">Reference proteome</keyword>
<keyword id="KW-0677">Repeat</keyword>
<keyword id="KW-0812">Transmembrane</keyword>
<keyword id="KW-1133">Transmembrane helix</keyword>
<keyword id="KW-0813">Transport</keyword>
<gene>
    <name type="primary">TRPV2</name>
    <name type="synonym">VRL</name>
</gene>
<proteinExistence type="evidence at protein level"/>
<feature type="chain" id="PRO_0000215342" description="Transient receptor potential cation channel subfamily V member 2">
    <location>
        <begin position="1"/>
        <end position="764"/>
    </location>
</feature>
<feature type="topological domain" description="Cytoplasmic" evidence="3">
    <location>
        <begin position="1"/>
        <end position="390"/>
    </location>
</feature>
<feature type="transmembrane region" description="Helical" evidence="3">
    <location>
        <begin position="391"/>
        <end position="411"/>
    </location>
</feature>
<feature type="topological domain" description="Extracellular" evidence="3">
    <location>
        <begin position="412"/>
        <end position="434"/>
    </location>
</feature>
<feature type="transmembrane region" description="Helical" evidence="3">
    <location>
        <begin position="435"/>
        <end position="455"/>
    </location>
</feature>
<feature type="topological domain" description="Cytoplasmic" evidence="3">
    <location>
        <begin position="456"/>
        <end position="471"/>
    </location>
</feature>
<feature type="transmembrane region" description="Helical" evidence="3">
    <location>
        <begin position="472"/>
        <end position="492"/>
    </location>
</feature>
<feature type="topological domain" description="Extracellular" evidence="3">
    <location>
        <position position="493"/>
    </location>
</feature>
<feature type="transmembrane region" description="Helical" evidence="3">
    <location>
        <begin position="494"/>
        <end position="514"/>
    </location>
</feature>
<feature type="topological domain" description="Cytoplasmic" evidence="3">
    <location>
        <begin position="515"/>
        <end position="537"/>
    </location>
</feature>
<feature type="transmembrane region" description="Helical" evidence="3">
    <location>
        <begin position="538"/>
        <end position="558"/>
    </location>
</feature>
<feature type="intramembrane region" description="Pore-forming" evidence="3">
    <location>
        <begin position="572"/>
        <end position="609"/>
    </location>
</feature>
<feature type="transmembrane region" description="Helical" evidence="3">
    <location>
        <begin position="622"/>
        <end position="642"/>
    </location>
</feature>
<feature type="topological domain" description="Cytoplasmic" evidence="3">
    <location>
        <begin position="643"/>
        <end position="764"/>
    </location>
</feature>
<feature type="repeat" description="ANK 1" evidence="4 7">
    <location>
        <begin position="72"/>
        <end position="114"/>
    </location>
</feature>
<feature type="repeat" description="ANK 2" evidence="4 7">
    <location>
        <begin position="115"/>
        <end position="161"/>
    </location>
</feature>
<feature type="repeat" description="ANK 3" evidence="4 7">
    <location>
        <begin position="162"/>
        <end position="207"/>
    </location>
</feature>
<feature type="repeat" description="ANK 4" evidence="4 7">
    <location>
        <begin position="208"/>
        <end position="243"/>
    </location>
</feature>
<feature type="repeat" description="ANK 5" evidence="4 7">
    <location>
        <begin position="244"/>
        <end position="292"/>
    </location>
</feature>
<feature type="repeat" description="ANK 6" evidence="4 7">
    <location>
        <begin position="293"/>
        <end position="319"/>
    </location>
</feature>
<feature type="region of interest" description="Required for interaction with SLC50A1" evidence="2">
    <location>
        <begin position="1"/>
        <end position="388"/>
    </location>
</feature>
<feature type="region of interest" description="Disordered" evidence="5">
    <location>
        <begin position="1"/>
        <end position="46"/>
    </location>
</feature>
<feature type="region of interest" description="Disordered" evidence="5">
    <location>
        <begin position="562"/>
        <end position="585"/>
    </location>
</feature>
<feature type="region of interest" description="Disordered" evidence="5">
    <location>
        <begin position="725"/>
        <end position="756"/>
    </location>
</feature>
<feature type="modified residue" description="Phosphoserine" evidence="2">
    <location>
        <position position="6"/>
    </location>
</feature>
<feature type="modified residue" description="Phosphoserine" evidence="1">
    <location>
        <position position="751"/>
    </location>
</feature>
<feature type="modified residue" description="Phosphoserine" evidence="1">
    <location>
        <position position="763"/>
    </location>
</feature>
<feature type="glycosylation site" description="N-linked (GlcNAc...) asparagine" evidence="3">
    <location>
        <position position="570"/>
    </location>
</feature>
<feature type="sequence variant" id="VAR_024678" description="In dbSNP:rs3813768.">
    <original>G</original>
    <variation>A</variation>
    <location>
        <position position="17"/>
    </location>
</feature>
<feature type="sequence variant" id="VAR_059838" description="In dbSNP:rs8071215.">
    <original>N</original>
    <variation>S</variation>
    <location>
        <position position="764"/>
    </location>
</feature>
<feature type="sequence conflict" description="In Ref. 2; AAD41724." evidence="9" ref="2">
    <original>P</original>
    <variation>S</variation>
    <location>
        <position position="52"/>
    </location>
</feature>
<feature type="sequence conflict" description="In Ref. 2; AAD41724." evidence="9" ref="2">
    <original>A</original>
    <variation>V</variation>
    <location>
        <position position="82"/>
    </location>
</feature>
<feature type="sequence conflict" description="In Ref. 2; AAD41724." evidence="9" ref="2">
    <original>K</original>
    <variation>N</variation>
    <location>
        <position position="200"/>
    </location>
</feature>
<feature type="sequence conflict" description="In Ref. 2; AAD41724." evidence="9" ref="2">
    <original>V</original>
    <variation>L</variation>
    <location>
        <position position="459"/>
    </location>
</feature>
<feature type="sequence conflict" description="In Ref. 2; AAD41724." evidence="9" ref="2">
    <original>FI</original>
    <variation>YT</variation>
    <location>
        <begin position="465"/>
        <end position="466"/>
    </location>
</feature>
<feature type="sequence conflict" description="In Ref. 2; AAD41724." evidence="9" ref="2">
    <original>QA</original>
    <variation>HS</variation>
    <location>
        <begin position="477"/>
        <end position="478"/>
    </location>
</feature>
<feature type="sequence conflict" description="In Ref. 2; AAD41724." evidence="9" ref="2">
    <original>Q</original>
    <variation>L</variation>
    <location>
        <position position="485"/>
    </location>
</feature>
<feature type="sequence conflict" description="In Ref. 2; AAD41724." evidence="9" ref="2">
    <original>A</original>
    <variation>V</variation>
    <location>
        <position position="491"/>
    </location>
</feature>
<feature type="sequence conflict" description="In Ref. 2; AAD41724." evidence="9" ref="2">
    <original>LL</original>
    <variation>MV</variation>
    <location>
        <begin position="535"/>
        <end position="536"/>
    </location>
</feature>
<feature type="sequence conflict" description="In Ref. 2; AAD41724." evidence="9" ref="2">
    <original>L</original>
    <variation>V</variation>
    <location>
        <position position="540"/>
    </location>
</feature>
<feature type="helix" evidence="10">
    <location>
        <begin position="76"/>
        <end position="84"/>
    </location>
</feature>
<feature type="helix" evidence="10">
    <location>
        <begin position="88"/>
        <end position="91"/>
    </location>
</feature>
<feature type="helix" evidence="10">
    <location>
        <begin position="94"/>
        <end position="101"/>
    </location>
</feature>
<feature type="helix" evidence="10">
    <location>
        <begin position="108"/>
        <end position="110"/>
    </location>
</feature>
<feature type="turn" evidence="10">
    <location>
        <begin position="113"/>
        <end position="115"/>
    </location>
</feature>
<feature type="helix" evidence="10">
    <location>
        <begin position="119"/>
        <end position="125"/>
    </location>
</feature>
<feature type="helix" evidence="10">
    <location>
        <begin position="135"/>
        <end position="145"/>
    </location>
</feature>
<feature type="helix" evidence="10">
    <location>
        <begin position="151"/>
        <end position="153"/>
    </location>
</feature>
<feature type="turn" evidence="10">
    <location>
        <begin position="159"/>
        <end position="163"/>
    </location>
</feature>
<feature type="helix" evidence="10">
    <location>
        <begin position="166"/>
        <end position="172"/>
    </location>
</feature>
<feature type="helix" evidence="10">
    <location>
        <begin position="176"/>
        <end position="184"/>
    </location>
</feature>
<feature type="helix" evidence="10">
    <location>
        <begin position="196"/>
        <end position="198"/>
    </location>
</feature>
<feature type="helix" evidence="10">
    <location>
        <begin position="212"/>
        <end position="218"/>
    </location>
</feature>
<feature type="helix" evidence="10">
    <location>
        <begin position="222"/>
        <end position="230"/>
    </location>
</feature>
<feature type="helix" evidence="10">
    <location>
        <begin position="248"/>
        <end position="255"/>
    </location>
</feature>
<feature type="helix" evidence="10">
    <location>
        <begin position="260"/>
        <end position="280"/>
    </location>
</feature>
<feature type="helix" evidence="10">
    <location>
        <begin position="286"/>
        <end position="288"/>
    </location>
</feature>
<feature type="helix" evidence="10">
    <location>
        <begin position="297"/>
        <end position="303"/>
    </location>
</feature>
<feature type="helix" evidence="10">
    <location>
        <begin position="307"/>
        <end position="315"/>
    </location>
</feature>
<comment type="function">
    <text evidence="6">Calcium-permeable, non-selective cation channel with an outward rectification. Seems to be regulated, at least in part, by IGF1, PDGF and neuropeptide head activator. May transduce physical stimuli in mast cells. Activated by temperatures higher than 52 degrees Celsius; is not activated by vanilloids and acidic pH.</text>
</comment>
<comment type="catalytic activity">
    <reaction evidence="6">
        <text>Ca(2+)(in) = Ca(2+)(out)</text>
        <dbReference type="Rhea" id="RHEA:29671"/>
        <dbReference type="ChEBI" id="CHEBI:29108"/>
    </reaction>
</comment>
<comment type="catalytic activity">
    <reaction evidence="6">
        <text>Mg(2+)(in) = Mg(2+)(out)</text>
        <dbReference type="Rhea" id="RHEA:29827"/>
        <dbReference type="ChEBI" id="CHEBI:18420"/>
    </reaction>
</comment>
<comment type="catalytic activity">
    <reaction evidence="6">
        <text>Na(+)(in) = Na(+)(out)</text>
        <dbReference type="Rhea" id="RHEA:34963"/>
        <dbReference type="ChEBI" id="CHEBI:29101"/>
    </reaction>
</comment>
<comment type="catalytic activity">
    <reaction evidence="6">
        <text>K(+)(in) = K(+)(out)</text>
        <dbReference type="Rhea" id="RHEA:29463"/>
        <dbReference type="ChEBI" id="CHEBI:29103"/>
    </reaction>
</comment>
<comment type="subunit">
    <text evidence="2 9">Homotetramer (Probable). Interacts with a cAMP-dependent protein kinase type II regulatory subunit (PRKAR2A or PRKAR2B) and ACBD3. Interacts with SLC50A1; the interaction probably occurs intracellularly and depends on TRPV2 N-glycosylation (By similarity).</text>
</comment>
<comment type="interaction">
    <interactant intactId="EBI-11721896">
        <id>Q9Y5S1</id>
    </interactant>
    <interactant intactId="EBI-25474821">
        <id>P0DTC2</id>
        <label>S</label>
    </interactant>
    <organismsDiffer>true</organismsDiffer>
    <experiments>2</experiments>
</comment>
<comment type="subcellular location">
    <subcellularLocation>
        <location evidence="1">Cell membrane</location>
        <topology evidence="3">Multi-pass membrane protein</topology>
    </subcellularLocation>
    <subcellularLocation>
        <location evidence="1">Cytoplasm</location>
    </subcellularLocation>
    <subcellularLocation>
        <location evidence="8">Melanosome</location>
    </subcellularLocation>
    <text evidence="1">Translocates from the cytoplasm to the plasma membrane upon ligand stimulation (By similarity). Identified by mass spectrometry in melanosome fractions from stage I to stage IV.</text>
</comment>
<comment type="PTM">
    <text evidence="2">N-glycosylated.</text>
</comment>
<comment type="PTM">
    <text evidence="2">Phosphorylated by PKA.</text>
</comment>
<comment type="similarity">
    <text evidence="9">Belongs to the transient receptor (TC 1.A.4) family. TrpV subfamily. TRPV2 sub-subfamily.</text>
</comment>
<comment type="online information" name="Atlas of Genetics and Cytogenetics in Oncology and Haematology">
    <link uri="https://atlasgeneticsoncology.org/gene/45817/TRPV2"/>
</comment>